<accession>Q2SMA3</accession>
<name>SECB_HAHCH</name>
<dbReference type="EMBL" id="CP000155">
    <property type="protein sequence ID" value="ABC28221.1"/>
    <property type="molecule type" value="Genomic_DNA"/>
</dbReference>
<dbReference type="RefSeq" id="WP_011395294.1">
    <property type="nucleotide sequence ID" value="NC_007645.1"/>
</dbReference>
<dbReference type="SMR" id="Q2SMA3"/>
<dbReference type="STRING" id="349521.HCH_01356"/>
<dbReference type="KEGG" id="hch:HCH_01356"/>
<dbReference type="eggNOG" id="COG1952">
    <property type="taxonomic scope" value="Bacteria"/>
</dbReference>
<dbReference type="HOGENOM" id="CLU_111574_1_0_6"/>
<dbReference type="OrthoDB" id="9795145at2"/>
<dbReference type="Proteomes" id="UP000000238">
    <property type="component" value="Chromosome"/>
</dbReference>
<dbReference type="GO" id="GO:0005737">
    <property type="term" value="C:cytoplasm"/>
    <property type="evidence" value="ECO:0007669"/>
    <property type="project" value="UniProtKB-SubCell"/>
</dbReference>
<dbReference type="GO" id="GO:0051082">
    <property type="term" value="F:unfolded protein binding"/>
    <property type="evidence" value="ECO:0007669"/>
    <property type="project" value="InterPro"/>
</dbReference>
<dbReference type="GO" id="GO:0006457">
    <property type="term" value="P:protein folding"/>
    <property type="evidence" value="ECO:0007669"/>
    <property type="project" value="UniProtKB-UniRule"/>
</dbReference>
<dbReference type="GO" id="GO:0051262">
    <property type="term" value="P:protein tetramerization"/>
    <property type="evidence" value="ECO:0007669"/>
    <property type="project" value="InterPro"/>
</dbReference>
<dbReference type="GO" id="GO:0015031">
    <property type="term" value="P:protein transport"/>
    <property type="evidence" value="ECO:0007669"/>
    <property type="project" value="UniProtKB-UniRule"/>
</dbReference>
<dbReference type="Gene3D" id="3.10.420.10">
    <property type="entry name" value="SecB-like"/>
    <property type="match status" value="1"/>
</dbReference>
<dbReference type="HAMAP" id="MF_00821">
    <property type="entry name" value="SecB"/>
    <property type="match status" value="1"/>
</dbReference>
<dbReference type="InterPro" id="IPR003708">
    <property type="entry name" value="SecB"/>
</dbReference>
<dbReference type="InterPro" id="IPR035958">
    <property type="entry name" value="SecB-like_sf"/>
</dbReference>
<dbReference type="NCBIfam" id="NF004393">
    <property type="entry name" value="PRK05751.1-4"/>
    <property type="match status" value="1"/>
</dbReference>
<dbReference type="NCBIfam" id="TIGR00809">
    <property type="entry name" value="secB"/>
    <property type="match status" value="1"/>
</dbReference>
<dbReference type="PANTHER" id="PTHR36918">
    <property type="match status" value="1"/>
</dbReference>
<dbReference type="PANTHER" id="PTHR36918:SF1">
    <property type="entry name" value="PROTEIN-EXPORT PROTEIN SECB"/>
    <property type="match status" value="1"/>
</dbReference>
<dbReference type="Pfam" id="PF02556">
    <property type="entry name" value="SecB"/>
    <property type="match status" value="1"/>
</dbReference>
<dbReference type="PRINTS" id="PR01594">
    <property type="entry name" value="SECBCHAPRONE"/>
</dbReference>
<dbReference type="SUPFAM" id="SSF54611">
    <property type="entry name" value="SecB-like"/>
    <property type="match status" value="1"/>
</dbReference>
<organism>
    <name type="scientific">Hahella chejuensis (strain KCTC 2396)</name>
    <dbReference type="NCBI Taxonomy" id="349521"/>
    <lineage>
        <taxon>Bacteria</taxon>
        <taxon>Pseudomonadati</taxon>
        <taxon>Pseudomonadota</taxon>
        <taxon>Gammaproteobacteria</taxon>
        <taxon>Oceanospirillales</taxon>
        <taxon>Hahellaceae</taxon>
        <taxon>Hahella</taxon>
    </lineage>
</organism>
<gene>
    <name evidence="1" type="primary">secB</name>
    <name type="ordered locus">HCH_01356</name>
</gene>
<proteinExistence type="inferred from homology"/>
<evidence type="ECO:0000255" key="1">
    <source>
        <dbReference type="HAMAP-Rule" id="MF_00821"/>
    </source>
</evidence>
<sequence length="159" mass="17671">MSENAEAPKQPVFALQRIYLKDLSFESPNSPAVFQSEWKPQVNMDLNTENKKVSDNQWEVVLTLTITAKLADKTAFVIEVQQAGVFMIDGLSPQQLAQTLGAFCPNILFPYARETIDMLAVKGSFPALMLQPVNFDAIYAEAVKRQQAQQAAPAEEAKH</sequence>
<feature type="chain" id="PRO_0000318239" description="Protein-export protein SecB">
    <location>
        <begin position="1"/>
        <end position="159"/>
    </location>
</feature>
<protein>
    <recommendedName>
        <fullName evidence="1">Protein-export protein SecB</fullName>
    </recommendedName>
</protein>
<reference key="1">
    <citation type="journal article" date="2005" name="Nucleic Acids Res.">
        <title>Genomic blueprint of Hahella chejuensis, a marine microbe producing an algicidal agent.</title>
        <authorList>
            <person name="Jeong H."/>
            <person name="Yim J.H."/>
            <person name="Lee C."/>
            <person name="Choi S.-H."/>
            <person name="Park Y.K."/>
            <person name="Yoon S.H."/>
            <person name="Hur C.-G."/>
            <person name="Kang H.-Y."/>
            <person name="Kim D."/>
            <person name="Lee H.H."/>
            <person name="Park K.H."/>
            <person name="Park S.-H."/>
            <person name="Park H.-S."/>
            <person name="Lee H.K."/>
            <person name="Oh T.K."/>
            <person name="Kim J.F."/>
        </authorList>
    </citation>
    <scope>NUCLEOTIDE SEQUENCE [LARGE SCALE GENOMIC DNA]</scope>
    <source>
        <strain>KCTC 2396</strain>
    </source>
</reference>
<comment type="function">
    <text evidence="1">One of the proteins required for the normal export of preproteins out of the cell cytoplasm. It is a molecular chaperone that binds to a subset of precursor proteins, maintaining them in a translocation-competent state. It also specifically binds to its receptor SecA.</text>
</comment>
<comment type="subunit">
    <text evidence="1">Homotetramer, a dimer of dimers. One homotetramer interacts with 1 SecA dimer.</text>
</comment>
<comment type="subcellular location">
    <subcellularLocation>
        <location evidence="1">Cytoplasm</location>
    </subcellularLocation>
</comment>
<comment type="similarity">
    <text evidence="1">Belongs to the SecB family.</text>
</comment>
<keyword id="KW-0143">Chaperone</keyword>
<keyword id="KW-0963">Cytoplasm</keyword>
<keyword id="KW-0653">Protein transport</keyword>
<keyword id="KW-1185">Reference proteome</keyword>
<keyword id="KW-0811">Translocation</keyword>
<keyword id="KW-0813">Transport</keyword>